<comment type="function">
    <text evidence="1">Catalyzes the ATP-dependent conversion of 7-carboxy-7-deazaguanine (CDG) to 7-cyano-7-deazaguanine (preQ(0)).</text>
</comment>
<comment type="catalytic activity">
    <reaction evidence="1">
        <text>7-carboxy-7-deazaguanine + NH4(+) + ATP = 7-cyano-7-deazaguanine + ADP + phosphate + H2O + H(+)</text>
        <dbReference type="Rhea" id="RHEA:27982"/>
        <dbReference type="ChEBI" id="CHEBI:15377"/>
        <dbReference type="ChEBI" id="CHEBI:15378"/>
        <dbReference type="ChEBI" id="CHEBI:28938"/>
        <dbReference type="ChEBI" id="CHEBI:30616"/>
        <dbReference type="ChEBI" id="CHEBI:43474"/>
        <dbReference type="ChEBI" id="CHEBI:45075"/>
        <dbReference type="ChEBI" id="CHEBI:61036"/>
        <dbReference type="ChEBI" id="CHEBI:456216"/>
        <dbReference type="EC" id="6.3.4.20"/>
    </reaction>
</comment>
<comment type="cofactor">
    <cofactor evidence="1">
        <name>Zn(2+)</name>
        <dbReference type="ChEBI" id="CHEBI:29105"/>
    </cofactor>
    <text evidence="1">Binds 1 zinc ion per subunit.</text>
</comment>
<comment type="pathway">
    <text evidence="1">Purine metabolism; 7-cyano-7-deazaguanine biosynthesis.</text>
</comment>
<comment type="similarity">
    <text evidence="1">Belongs to the QueC family.</text>
</comment>
<proteinExistence type="inferred from homology"/>
<evidence type="ECO:0000255" key="1">
    <source>
        <dbReference type="HAMAP-Rule" id="MF_01633"/>
    </source>
</evidence>
<feature type="chain" id="PRO_1000186573" description="7-cyano-7-deazaguanine synthase">
    <location>
        <begin position="1"/>
        <end position="227"/>
    </location>
</feature>
<feature type="binding site" evidence="1">
    <location>
        <begin position="7"/>
        <end position="17"/>
    </location>
    <ligand>
        <name>ATP</name>
        <dbReference type="ChEBI" id="CHEBI:30616"/>
    </ligand>
</feature>
<feature type="binding site" evidence="1">
    <location>
        <position position="187"/>
    </location>
    <ligand>
        <name>Zn(2+)</name>
        <dbReference type="ChEBI" id="CHEBI:29105"/>
    </ligand>
</feature>
<feature type="binding site" evidence="1">
    <location>
        <position position="195"/>
    </location>
    <ligand>
        <name>Zn(2+)</name>
        <dbReference type="ChEBI" id="CHEBI:29105"/>
    </ligand>
</feature>
<feature type="binding site" evidence="1">
    <location>
        <position position="198"/>
    </location>
    <ligand>
        <name>Zn(2+)</name>
        <dbReference type="ChEBI" id="CHEBI:29105"/>
    </ligand>
</feature>
<feature type="binding site" evidence="1">
    <location>
        <position position="201"/>
    </location>
    <ligand>
        <name>Zn(2+)</name>
        <dbReference type="ChEBI" id="CHEBI:29105"/>
    </ligand>
</feature>
<sequence length="227" mass="24904">MKAVLLVSGGMDSLVATALAHHHGFELAAMHVNYGQRTWQKELECFRQICDHYGIEKRLEIDAGFLGAIGGSSLTDAAIPVGPADLAGTDIPTSYVPFRNANFLSMAVSWSEVIGANRIYIGAVEEDSSGYPDCRKVFYDAFNQVIEHGTRPETSIEIVTPLIDMSKAEIVKRGMELDAPFHFSWSCYKSEGKACGVCDSCARRLRAFASVGIADPVEYEVRPDYLQ</sequence>
<gene>
    <name evidence="1" type="primary">queC</name>
    <name type="ordered locus">Cpar_1364</name>
</gene>
<name>QUEC_CHLP8</name>
<accession>B3QPB3</accession>
<protein>
    <recommendedName>
        <fullName evidence="1">7-cyano-7-deazaguanine synthase</fullName>
        <ecNumber evidence="1">6.3.4.20</ecNumber>
    </recommendedName>
    <alternativeName>
        <fullName evidence="1">7-cyano-7-carbaguanine synthase</fullName>
    </alternativeName>
    <alternativeName>
        <fullName evidence="1">PreQ(0) synthase</fullName>
    </alternativeName>
    <alternativeName>
        <fullName evidence="1">Queuosine biosynthesis protein QueC</fullName>
    </alternativeName>
</protein>
<organism>
    <name type="scientific">Chlorobaculum parvum (strain DSM 263 / NCIMB 8327)</name>
    <name type="common">Chlorobium vibrioforme subsp. thiosulfatophilum</name>
    <dbReference type="NCBI Taxonomy" id="517417"/>
    <lineage>
        <taxon>Bacteria</taxon>
        <taxon>Pseudomonadati</taxon>
        <taxon>Chlorobiota</taxon>
        <taxon>Chlorobiia</taxon>
        <taxon>Chlorobiales</taxon>
        <taxon>Chlorobiaceae</taxon>
        <taxon>Chlorobaculum</taxon>
    </lineage>
</organism>
<reference key="1">
    <citation type="submission" date="2008-06" db="EMBL/GenBank/DDBJ databases">
        <title>Complete sequence of Chlorobaculum parvum NCIB 8327.</title>
        <authorList>
            <consortium name="US DOE Joint Genome Institute"/>
            <person name="Lucas S."/>
            <person name="Copeland A."/>
            <person name="Lapidus A."/>
            <person name="Glavina del Rio T."/>
            <person name="Dalin E."/>
            <person name="Tice H."/>
            <person name="Bruce D."/>
            <person name="Goodwin L."/>
            <person name="Pitluck S."/>
            <person name="Schmutz J."/>
            <person name="Larimer F."/>
            <person name="Land M."/>
            <person name="Hauser L."/>
            <person name="Kyrpides N."/>
            <person name="Mikhailova N."/>
            <person name="Zhao F."/>
            <person name="Li T."/>
            <person name="Liu Z."/>
            <person name="Overmann J."/>
            <person name="Bryant D.A."/>
            <person name="Richardson P."/>
        </authorList>
    </citation>
    <scope>NUCLEOTIDE SEQUENCE [LARGE SCALE GENOMIC DNA]</scope>
    <source>
        <strain>DSM 263 / NCIMB 8327</strain>
    </source>
</reference>
<keyword id="KW-0067">ATP-binding</keyword>
<keyword id="KW-0436">Ligase</keyword>
<keyword id="KW-0479">Metal-binding</keyword>
<keyword id="KW-0547">Nucleotide-binding</keyword>
<keyword id="KW-0671">Queuosine biosynthesis</keyword>
<keyword id="KW-0862">Zinc</keyword>
<dbReference type="EC" id="6.3.4.20" evidence="1"/>
<dbReference type="EMBL" id="CP001099">
    <property type="protein sequence ID" value="ACF11766.1"/>
    <property type="molecule type" value="Genomic_DNA"/>
</dbReference>
<dbReference type="RefSeq" id="WP_012502599.1">
    <property type="nucleotide sequence ID" value="NC_011027.1"/>
</dbReference>
<dbReference type="SMR" id="B3QPB3"/>
<dbReference type="STRING" id="517417.Cpar_1364"/>
<dbReference type="KEGG" id="cpc:Cpar_1364"/>
<dbReference type="eggNOG" id="COG0603">
    <property type="taxonomic scope" value="Bacteria"/>
</dbReference>
<dbReference type="HOGENOM" id="CLU_081854_1_0_10"/>
<dbReference type="OrthoDB" id="9789567at2"/>
<dbReference type="UniPathway" id="UPA00391"/>
<dbReference type="Proteomes" id="UP000008811">
    <property type="component" value="Chromosome"/>
</dbReference>
<dbReference type="GO" id="GO:0005524">
    <property type="term" value="F:ATP binding"/>
    <property type="evidence" value="ECO:0007669"/>
    <property type="project" value="UniProtKB-UniRule"/>
</dbReference>
<dbReference type="GO" id="GO:0016879">
    <property type="term" value="F:ligase activity, forming carbon-nitrogen bonds"/>
    <property type="evidence" value="ECO:0007669"/>
    <property type="project" value="UniProtKB-UniRule"/>
</dbReference>
<dbReference type="GO" id="GO:0008270">
    <property type="term" value="F:zinc ion binding"/>
    <property type="evidence" value="ECO:0007669"/>
    <property type="project" value="UniProtKB-UniRule"/>
</dbReference>
<dbReference type="GO" id="GO:0008616">
    <property type="term" value="P:queuosine biosynthetic process"/>
    <property type="evidence" value="ECO:0007669"/>
    <property type="project" value="UniProtKB-UniRule"/>
</dbReference>
<dbReference type="CDD" id="cd01995">
    <property type="entry name" value="QueC-like"/>
    <property type="match status" value="1"/>
</dbReference>
<dbReference type="Gene3D" id="3.40.50.620">
    <property type="entry name" value="HUPs"/>
    <property type="match status" value="1"/>
</dbReference>
<dbReference type="HAMAP" id="MF_01633">
    <property type="entry name" value="QueC"/>
    <property type="match status" value="1"/>
</dbReference>
<dbReference type="InterPro" id="IPR018317">
    <property type="entry name" value="QueC"/>
</dbReference>
<dbReference type="InterPro" id="IPR014729">
    <property type="entry name" value="Rossmann-like_a/b/a_fold"/>
</dbReference>
<dbReference type="NCBIfam" id="TIGR00364">
    <property type="entry name" value="7-cyano-7-deazaguanine synthase QueC"/>
    <property type="match status" value="1"/>
</dbReference>
<dbReference type="PANTHER" id="PTHR42914">
    <property type="entry name" value="7-CYANO-7-DEAZAGUANINE SYNTHASE"/>
    <property type="match status" value="1"/>
</dbReference>
<dbReference type="PANTHER" id="PTHR42914:SF1">
    <property type="entry name" value="7-CYANO-7-DEAZAGUANINE SYNTHASE"/>
    <property type="match status" value="1"/>
</dbReference>
<dbReference type="Pfam" id="PF06508">
    <property type="entry name" value="QueC"/>
    <property type="match status" value="1"/>
</dbReference>
<dbReference type="PIRSF" id="PIRSF006293">
    <property type="entry name" value="ExsB"/>
    <property type="match status" value="1"/>
</dbReference>
<dbReference type="SUPFAM" id="SSF52402">
    <property type="entry name" value="Adenine nucleotide alpha hydrolases-like"/>
    <property type="match status" value="1"/>
</dbReference>